<keyword id="KW-1185">Reference proteome</keyword>
<dbReference type="EMBL" id="LT708304">
    <property type="protein sequence ID" value="SIU00149.1"/>
    <property type="molecule type" value="Genomic_DNA"/>
</dbReference>
<dbReference type="RefSeq" id="NP_855198.1">
    <property type="nucleotide sequence ID" value="NC_002945.3"/>
</dbReference>
<dbReference type="SMR" id="P64862"/>
<dbReference type="KEGG" id="mbo:BQ2027_MB1546"/>
<dbReference type="PATRIC" id="fig|233413.5.peg.1689"/>
<dbReference type="Proteomes" id="UP000001419">
    <property type="component" value="Chromosome"/>
</dbReference>
<dbReference type="Gene3D" id="3.90.1150.10">
    <property type="entry name" value="Aspartate Aminotransferase, domain 1"/>
    <property type="match status" value="1"/>
</dbReference>
<dbReference type="InterPro" id="IPR000653">
    <property type="entry name" value="DegT/StrS_aminotransferase"/>
</dbReference>
<dbReference type="InterPro" id="IPR015422">
    <property type="entry name" value="PyrdxlP-dep_Trfase_small"/>
</dbReference>
<dbReference type="Pfam" id="PF01041">
    <property type="entry name" value="DegT_DnrJ_EryC1"/>
    <property type="match status" value="1"/>
</dbReference>
<gene>
    <name type="ordered locus">BQ2027_MB1546</name>
</gene>
<accession>P64862</accession>
<accession>A0A1R3XYI8</accession>
<accession>Q50588</accession>
<accession>X2BI40</accession>
<sequence length="89" mass="9200">MRCGCLACDGVLCANGPGRPRRPALTCTAVATRTLHSLATNAELVESADLTVTEDICSRIVSLPVHDHMAIADVARVVAPFGEGLARGG</sequence>
<protein>
    <recommendedName>
        <fullName>Uncharacterized protein Mb1546</fullName>
    </recommendedName>
</protein>
<name>Y1546_MYCBO</name>
<reference key="1">
    <citation type="journal article" date="2003" name="Proc. Natl. Acad. Sci. U.S.A.">
        <title>The complete genome sequence of Mycobacterium bovis.</title>
        <authorList>
            <person name="Garnier T."/>
            <person name="Eiglmeier K."/>
            <person name="Camus J.-C."/>
            <person name="Medina N."/>
            <person name="Mansoor H."/>
            <person name="Pryor M."/>
            <person name="Duthoy S."/>
            <person name="Grondin S."/>
            <person name="Lacroix C."/>
            <person name="Monsempe C."/>
            <person name="Simon S."/>
            <person name="Harris B."/>
            <person name="Atkin R."/>
            <person name="Doggett J."/>
            <person name="Mayes R."/>
            <person name="Keating L."/>
            <person name="Wheeler P.R."/>
            <person name="Parkhill J."/>
            <person name="Barrell B.G."/>
            <person name="Cole S.T."/>
            <person name="Gordon S.V."/>
            <person name="Hewinson R.G."/>
        </authorList>
    </citation>
    <scope>NUCLEOTIDE SEQUENCE [LARGE SCALE GENOMIC DNA]</scope>
    <source>
        <strain>ATCC BAA-935 / AF2122/97</strain>
    </source>
</reference>
<reference key="2">
    <citation type="journal article" date="2017" name="Genome Announc.">
        <title>Updated reference genome sequence and annotation of Mycobacterium bovis AF2122/97.</title>
        <authorList>
            <person name="Malone K.M."/>
            <person name="Farrell D."/>
            <person name="Stuber T.P."/>
            <person name="Schubert O.T."/>
            <person name="Aebersold R."/>
            <person name="Robbe-Austerman S."/>
            <person name="Gordon S.V."/>
        </authorList>
    </citation>
    <scope>NUCLEOTIDE SEQUENCE [LARGE SCALE GENOMIC DNA]</scope>
    <scope>GENOME REANNOTATION</scope>
    <source>
        <strain>ATCC BAA-935 / AF2122/97</strain>
    </source>
</reference>
<evidence type="ECO:0000305" key="1"/>
<feature type="chain" id="PRO_0000103867" description="Uncharacterized protein Mb1546">
    <location>
        <begin position="1"/>
        <end position="89"/>
    </location>
</feature>
<comment type="similarity">
    <text evidence="1">To M.tuberculosis Rv3402c.</text>
</comment>
<organism>
    <name type="scientific">Mycobacterium bovis (strain ATCC BAA-935 / AF2122/97)</name>
    <dbReference type="NCBI Taxonomy" id="233413"/>
    <lineage>
        <taxon>Bacteria</taxon>
        <taxon>Bacillati</taxon>
        <taxon>Actinomycetota</taxon>
        <taxon>Actinomycetes</taxon>
        <taxon>Mycobacteriales</taxon>
        <taxon>Mycobacteriaceae</taxon>
        <taxon>Mycobacterium</taxon>
        <taxon>Mycobacterium tuberculosis complex</taxon>
    </lineage>
</organism>
<proteinExistence type="predicted"/>